<organism>
    <name type="scientific">Arabidopsis thaliana</name>
    <name type="common">Mouse-ear cress</name>
    <dbReference type="NCBI Taxonomy" id="3702"/>
    <lineage>
        <taxon>Eukaryota</taxon>
        <taxon>Viridiplantae</taxon>
        <taxon>Streptophyta</taxon>
        <taxon>Embryophyta</taxon>
        <taxon>Tracheophyta</taxon>
        <taxon>Spermatophyta</taxon>
        <taxon>Magnoliopsida</taxon>
        <taxon>eudicotyledons</taxon>
        <taxon>Gunneridae</taxon>
        <taxon>Pentapetalae</taxon>
        <taxon>rosids</taxon>
        <taxon>malvids</taxon>
        <taxon>Brassicales</taxon>
        <taxon>Brassicaceae</taxon>
        <taxon>Camelineae</taxon>
        <taxon>Arabidopsis</taxon>
    </lineage>
</organism>
<proteinExistence type="evidence at transcript level"/>
<reference key="1">
    <citation type="journal article" date="1997" name="DNA Res.">
        <title>Structural analysis of Arabidopsis thaliana chromosome 5. II. Sequence features of the regions of 1,044,062 bp covered by thirteen physically assigned P1 clones.</title>
        <authorList>
            <person name="Kotani H."/>
            <person name="Nakamura Y."/>
            <person name="Sato S."/>
            <person name="Kaneko T."/>
            <person name="Asamizu E."/>
            <person name="Miyajima N."/>
            <person name="Tabata S."/>
        </authorList>
    </citation>
    <scope>NUCLEOTIDE SEQUENCE [LARGE SCALE GENOMIC DNA]</scope>
    <source>
        <strain>cv. Columbia</strain>
    </source>
</reference>
<reference key="2">
    <citation type="journal article" date="2017" name="Plant J.">
        <title>Araport11: a complete reannotation of the Arabidopsis thaliana reference genome.</title>
        <authorList>
            <person name="Cheng C.Y."/>
            <person name="Krishnakumar V."/>
            <person name="Chan A.P."/>
            <person name="Thibaud-Nissen F."/>
            <person name="Schobel S."/>
            <person name="Town C.D."/>
        </authorList>
    </citation>
    <scope>GENOME REANNOTATION</scope>
    <source>
        <strain>cv. Columbia</strain>
    </source>
</reference>
<reference key="3">
    <citation type="submission" date="2004-11" db="EMBL/GenBank/DDBJ databases">
        <title>Arabidopsis ORF clones.</title>
        <authorList>
            <person name="Kim C.J."/>
            <person name="Chen H."/>
            <person name="Cheuk R.F."/>
            <person name="Shinn P."/>
            <person name="Ecker J.R."/>
        </authorList>
    </citation>
    <scope>NUCLEOTIDE SEQUENCE [LARGE SCALE MRNA]</scope>
    <source>
        <strain>cv. Columbia</strain>
    </source>
</reference>
<reference key="4">
    <citation type="journal article" date="2003" name="Plant Physiol.">
        <title>The fasciclin-like arabinogalactan proteins of Arabidopsis. A multigene family of putative cell adhesion molecules.</title>
        <authorList>
            <person name="Johnson K.L."/>
            <person name="Jones B.J."/>
            <person name="Bacic A."/>
            <person name="Schultz C.J."/>
        </authorList>
    </citation>
    <scope>GENE FAMILY ORGANIZATION</scope>
    <scope>NOMENCLATURE</scope>
</reference>
<evidence type="ECO:0000255" key="1"/>
<evidence type="ECO:0000255" key="2">
    <source>
        <dbReference type="PROSITE-ProRule" id="PRU00082"/>
    </source>
</evidence>
<evidence type="ECO:0000256" key="3">
    <source>
        <dbReference type="SAM" id="MobiDB-lite"/>
    </source>
</evidence>
<evidence type="ECO:0000305" key="4"/>
<sequence>MDRRIYGGSAVIHLFLFFSVLIFSAASALSKNQSPSSGSGQINSNSVLVALLDSRYTELAELVEKALLLQTLEDAVGRHNITIFAPRNEALERDLDPEFKRFLLEPGNLKSLQTLLMFHIIPNRVGSNQWPSEESGRVKHHTLGNDQVRLSNGQGKKMVDLAEIIRPDDLTRPDGLIHGIERLLIPRSVQEDFNRRRSLQSISAVLPEGAPEVDPRTNRLKKPAAPVPAGSPPALPIQSAMAPGPSLAPAPAPGPGGKQHHFDGEAQVKDFIHTLLHYGGYNEMADILVNLTSLATEMGRLVSEGYVLTVLAPNDEAMAKLTTDQLSEPGAPEQIVYYHIIPEYQTEESMYNSVRRFGKVKFDTLRFPHKVAAKEADGSVKFGDGEKSAYLFDPDIYTDGRISVQGIDGVLFPQEEEVVESVKKPVKKIVQPRRGKLLEVACSMLGAFGKDTYLSKCR</sequence>
<protein>
    <recommendedName>
        <fullName>Fasciclin-like arabinogalactan protein 17</fullName>
    </recommendedName>
</protein>
<keyword id="KW-0325">Glycoprotein</keyword>
<keyword id="KW-0654">Proteoglycan</keyword>
<keyword id="KW-1185">Reference proteome</keyword>
<keyword id="KW-0677">Repeat</keyword>
<keyword id="KW-0964">Secreted</keyword>
<keyword id="KW-0732">Signal</keyword>
<comment type="function">
    <text>May be a cell surface adhesion protein.</text>
</comment>
<comment type="subcellular location">
    <subcellularLocation>
        <location evidence="4">Secreted</location>
    </subcellularLocation>
</comment>
<comment type="similarity">
    <text evidence="4">Belongs to the fasciclin-like AGP family.</text>
</comment>
<comment type="sequence caution" evidence="4">
    <conflict type="erroneous gene model prediction">
        <sequence resource="EMBL-CDS" id="BAB08961"/>
    </conflict>
</comment>
<dbReference type="EMBL" id="AB006700">
    <property type="protein sequence ID" value="BAB08961.1"/>
    <property type="status" value="ALT_SEQ"/>
    <property type="molecule type" value="Genomic_DNA"/>
</dbReference>
<dbReference type="EMBL" id="CP002688">
    <property type="protein sequence ID" value="AED91009.1"/>
    <property type="molecule type" value="Genomic_DNA"/>
</dbReference>
<dbReference type="EMBL" id="BT015342">
    <property type="protein sequence ID" value="AAU05465.1"/>
    <property type="molecule type" value="mRNA"/>
</dbReference>
<dbReference type="EMBL" id="BT020253">
    <property type="protein sequence ID" value="AAV74247.1"/>
    <property type="molecule type" value="mRNA"/>
</dbReference>
<dbReference type="RefSeq" id="NP_196257.2">
    <property type="nucleotide sequence ID" value="NM_120722.4"/>
</dbReference>
<dbReference type="SMR" id="Q66GR0"/>
<dbReference type="BioGRID" id="15806">
    <property type="interactions" value="1"/>
</dbReference>
<dbReference type="FunCoup" id="Q66GR0">
    <property type="interactions" value="973"/>
</dbReference>
<dbReference type="STRING" id="3702.Q66GR0"/>
<dbReference type="GlyCosmos" id="Q66GR0">
    <property type="glycosylation" value="2 sites, No reported glycans"/>
</dbReference>
<dbReference type="GlyGen" id="Q66GR0">
    <property type="glycosylation" value="2 sites"/>
</dbReference>
<dbReference type="PaxDb" id="3702-AT5G06390.1"/>
<dbReference type="ProteomicsDB" id="230429"/>
<dbReference type="EnsemblPlants" id="AT5G06390.1">
    <property type="protein sequence ID" value="AT5G06390.1"/>
    <property type="gene ID" value="AT5G06390"/>
</dbReference>
<dbReference type="GeneID" id="830527"/>
<dbReference type="Gramene" id="AT5G06390.1">
    <property type="protein sequence ID" value="AT5G06390.1"/>
    <property type="gene ID" value="AT5G06390"/>
</dbReference>
<dbReference type="KEGG" id="ath:AT5G06390"/>
<dbReference type="Araport" id="AT5G06390"/>
<dbReference type="TAIR" id="AT5G06390">
    <property type="gene designation" value="FLA17"/>
</dbReference>
<dbReference type="eggNOG" id="KOG1437">
    <property type="taxonomic scope" value="Eukaryota"/>
</dbReference>
<dbReference type="HOGENOM" id="CLU_047484_0_0_1"/>
<dbReference type="InParanoid" id="Q66GR0"/>
<dbReference type="OMA" id="SEQWPKE"/>
<dbReference type="PhylomeDB" id="Q66GR0"/>
<dbReference type="PRO" id="PR:Q66GR0"/>
<dbReference type="Proteomes" id="UP000006548">
    <property type="component" value="Chromosome 5"/>
</dbReference>
<dbReference type="ExpressionAtlas" id="Q66GR0">
    <property type="expression patterns" value="baseline and differential"/>
</dbReference>
<dbReference type="GO" id="GO:0005576">
    <property type="term" value="C:extracellular region"/>
    <property type="evidence" value="ECO:0007669"/>
    <property type="project" value="UniProtKB-SubCell"/>
</dbReference>
<dbReference type="GO" id="GO:0000325">
    <property type="term" value="C:plant-type vacuole"/>
    <property type="evidence" value="ECO:0007005"/>
    <property type="project" value="TAIR"/>
</dbReference>
<dbReference type="FunFam" id="2.30.180.10:FF:000024">
    <property type="entry name" value="fasciclin-like arabinogalactan protein 15"/>
    <property type="match status" value="1"/>
</dbReference>
<dbReference type="FunFam" id="2.30.180.10:FF:000011">
    <property type="entry name" value="Fasciclin-like arabinogalactan protein 16"/>
    <property type="match status" value="1"/>
</dbReference>
<dbReference type="Gene3D" id="2.30.180.10">
    <property type="entry name" value="FAS1 domain"/>
    <property type="match status" value="2"/>
</dbReference>
<dbReference type="InterPro" id="IPR036378">
    <property type="entry name" value="FAS1_dom_sf"/>
</dbReference>
<dbReference type="InterPro" id="IPR000782">
    <property type="entry name" value="FAS1_domain"/>
</dbReference>
<dbReference type="InterPro" id="IPR044654">
    <property type="entry name" value="FLA15/16/17/18"/>
</dbReference>
<dbReference type="PANTHER" id="PTHR32499">
    <property type="entry name" value="FASCICLIN-LIKE ARABINOGALACTAN PROTEIN 16"/>
    <property type="match status" value="1"/>
</dbReference>
<dbReference type="PANTHER" id="PTHR32499:SF17">
    <property type="entry name" value="FASCICLIN-LIKE ARABINOGALACTAN PROTEIN 17"/>
    <property type="match status" value="1"/>
</dbReference>
<dbReference type="Pfam" id="PF02469">
    <property type="entry name" value="Fasciclin"/>
    <property type="match status" value="2"/>
</dbReference>
<dbReference type="SMART" id="SM00554">
    <property type="entry name" value="FAS1"/>
    <property type="match status" value="2"/>
</dbReference>
<dbReference type="SUPFAM" id="SSF82153">
    <property type="entry name" value="FAS1 domain"/>
    <property type="match status" value="2"/>
</dbReference>
<dbReference type="PROSITE" id="PS50213">
    <property type="entry name" value="FAS1"/>
    <property type="match status" value="2"/>
</dbReference>
<name>FLA17_ARATH</name>
<accession>Q66GR0</accession>
<accession>Q9FNG9</accession>
<gene>
    <name type="primary">FLA17</name>
    <name type="ordered locus">At5g06390</name>
    <name type="ORF">MHF15.9</name>
</gene>
<feature type="signal peptide" evidence="1">
    <location>
        <begin position="1"/>
        <end position="30"/>
    </location>
</feature>
<feature type="chain" id="PRO_0000253877" description="Fasciclin-like arabinogalactan protein 17">
    <location>
        <begin position="31"/>
        <end position="458"/>
    </location>
</feature>
<feature type="domain" description="FAS1 1" evidence="2">
    <location>
        <begin position="43"/>
        <end position="184"/>
    </location>
</feature>
<feature type="domain" description="FAS1 2" evidence="2">
    <location>
        <begin position="268"/>
        <end position="411"/>
    </location>
</feature>
<feature type="region of interest" description="Disordered" evidence="3">
    <location>
        <begin position="207"/>
        <end position="262"/>
    </location>
</feature>
<feature type="compositionally biased region" description="Pro residues" evidence="3">
    <location>
        <begin position="225"/>
        <end position="235"/>
    </location>
</feature>
<feature type="glycosylation site" description="N-linked (GlcNAc...) asparagine" evidence="1">
    <location>
        <position position="80"/>
    </location>
</feature>
<feature type="glycosylation site" description="N-linked (GlcNAc...) asparagine" evidence="1">
    <location>
        <position position="290"/>
    </location>
</feature>